<keyword id="KW-0137">Centromere</keyword>
<keyword id="KW-0158">Chromosome</keyword>
<keyword id="KW-0995">Kinetochore</keyword>
<keyword id="KW-0509">mRNA transport</keyword>
<keyword id="KW-0906">Nuclear pore complex</keyword>
<keyword id="KW-0539">Nucleus</keyword>
<keyword id="KW-0653">Protein transport</keyword>
<keyword id="KW-1185">Reference proteome</keyword>
<keyword id="KW-0811">Translocation</keyword>
<keyword id="KW-0813">Transport</keyword>
<protein>
    <recommendedName>
        <fullName evidence="1">Nuclear pore complex protein Nup133</fullName>
    </recommendedName>
    <alternativeName>
        <fullName evidence="5">Nucleoporin 133</fullName>
    </alternativeName>
</protein>
<dbReference type="EMBL" id="AL929114">
    <property type="status" value="NOT_ANNOTATED_CDS"/>
    <property type="molecule type" value="Genomic_DNA"/>
</dbReference>
<dbReference type="EMBL" id="CU467834">
    <property type="status" value="NOT_ANNOTATED_CDS"/>
    <property type="molecule type" value="Genomic_DNA"/>
</dbReference>
<dbReference type="EMBL" id="BC052764">
    <property type="protein sequence ID" value="AAH52764.1"/>
    <property type="molecule type" value="mRNA"/>
</dbReference>
<dbReference type="RefSeq" id="NP_998696.1">
    <property type="nucleotide sequence ID" value="NM_213531.1"/>
</dbReference>
<dbReference type="SMR" id="F1QNV4"/>
<dbReference type="FunCoup" id="F1QNV4">
    <property type="interactions" value="2462"/>
</dbReference>
<dbReference type="STRING" id="7955.ENSDARP00000023984"/>
<dbReference type="PaxDb" id="7955-ENSDARP00000023984"/>
<dbReference type="Ensembl" id="ENSDART00000020680">
    <property type="protein sequence ID" value="ENSDARP00000023984"/>
    <property type="gene ID" value="ENSDARG00000010078"/>
</dbReference>
<dbReference type="GeneID" id="406852"/>
<dbReference type="KEGG" id="dre:406852"/>
<dbReference type="AGR" id="ZFIN:ZDB-GENE-040426-2941"/>
<dbReference type="CTD" id="55746"/>
<dbReference type="ZFIN" id="ZDB-GENE-040426-2941">
    <property type="gene designation" value="nup133"/>
</dbReference>
<dbReference type="eggNOG" id="KOG4121">
    <property type="taxonomic scope" value="Eukaryota"/>
</dbReference>
<dbReference type="HOGENOM" id="CLU_008593_0_0_1"/>
<dbReference type="InParanoid" id="F1QNV4"/>
<dbReference type="OMA" id="TRKYEEY"/>
<dbReference type="OrthoDB" id="103454at2759"/>
<dbReference type="PhylomeDB" id="F1QNV4"/>
<dbReference type="TreeFam" id="TF106141"/>
<dbReference type="PRO" id="PR:F1QNV4"/>
<dbReference type="Proteomes" id="UP000000437">
    <property type="component" value="Chromosome 1"/>
</dbReference>
<dbReference type="Bgee" id="ENSDARG00000010078">
    <property type="expression patterns" value="Expressed in presomitic mesoderm and 36 other cell types or tissues"/>
</dbReference>
<dbReference type="GO" id="GO:0000776">
    <property type="term" value="C:kinetochore"/>
    <property type="evidence" value="ECO:0007669"/>
    <property type="project" value="UniProtKB-KW"/>
</dbReference>
<dbReference type="GO" id="GO:0031080">
    <property type="term" value="C:nuclear pore outer ring"/>
    <property type="evidence" value="ECO:0000318"/>
    <property type="project" value="GO_Central"/>
</dbReference>
<dbReference type="GO" id="GO:0017056">
    <property type="term" value="F:structural constituent of nuclear pore"/>
    <property type="evidence" value="ECO:0000318"/>
    <property type="project" value="GO_Central"/>
</dbReference>
<dbReference type="GO" id="GO:0016973">
    <property type="term" value="P:poly(A)+ mRNA export from nucleus"/>
    <property type="evidence" value="ECO:0000318"/>
    <property type="project" value="GO_Central"/>
</dbReference>
<dbReference type="GO" id="GO:0006606">
    <property type="term" value="P:protein import into nucleus"/>
    <property type="evidence" value="ECO:0000318"/>
    <property type="project" value="GO_Central"/>
</dbReference>
<dbReference type="GO" id="GO:0000972">
    <property type="term" value="P:transcription-dependent tethering of RNA polymerase II gene DNA at nuclear periphery"/>
    <property type="evidence" value="ECO:0000318"/>
    <property type="project" value="GO_Central"/>
</dbReference>
<dbReference type="FunFam" id="1.25.40.700:FF:000001">
    <property type="entry name" value="Nuclear pore complex protein"/>
    <property type="match status" value="1"/>
</dbReference>
<dbReference type="FunFam" id="1.20.58.1380:FF:000001">
    <property type="entry name" value="Nuclear pore complex protein Nup133"/>
    <property type="match status" value="1"/>
</dbReference>
<dbReference type="FunFam" id="2.130.10.10:FF:000238">
    <property type="entry name" value="Nuclear pore complex protein Nup133"/>
    <property type="match status" value="1"/>
</dbReference>
<dbReference type="Gene3D" id="1.20.58.1380">
    <property type="match status" value="1"/>
</dbReference>
<dbReference type="Gene3D" id="1.25.40.700">
    <property type="match status" value="1"/>
</dbReference>
<dbReference type="Gene3D" id="2.130.10.10">
    <property type="entry name" value="YVTN repeat-like/Quinoprotein amine dehydrogenase"/>
    <property type="match status" value="1"/>
</dbReference>
<dbReference type="InterPro" id="IPR007187">
    <property type="entry name" value="Nucleoporin_Nup133/Nup155_C"/>
</dbReference>
<dbReference type="InterPro" id="IPR014908">
    <property type="entry name" value="Nucleoporin_Nup133/Nup155_N"/>
</dbReference>
<dbReference type="InterPro" id="IPR037624">
    <property type="entry name" value="Nup133-like"/>
</dbReference>
<dbReference type="InterPro" id="IPR015943">
    <property type="entry name" value="WD40/YVTN_repeat-like_dom_sf"/>
</dbReference>
<dbReference type="PANTHER" id="PTHR13405">
    <property type="entry name" value="NUCLEAR PORE COMPLEX PROTEIN NUP133"/>
    <property type="match status" value="1"/>
</dbReference>
<dbReference type="PANTHER" id="PTHR13405:SF11">
    <property type="entry name" value="NUCLEAR PORE COMPLEX PROTEIN NUP133"/>
    <property type="match status" value="1"/>
</dbReference>
<dbReference type="Pfam" id="PF03177">
    <property type="entry name" value="Nucleoporin_C"/>
    <property type="match status" value="1"/>
</dbReference>
<dbReference type="Pfam" id="PF08801">
    <property type="entry name" value="Nucleoporin_N"/>
    <property type="match status" value="1"/>
</dbReference>
<dbReference type="SUPFAM" id="SSF117289">
    <property type="entry name" value="Nucleoporin domain"/>
    <property type="match status" value="1"/>
</dbReference>
<reference key="1">
    <citation type="journal article" date="2013" name="Nature">
        <title>The zebrafish reference genome sequence and its relationship to the human genome.</title>
        <authorList>
            <person name="Howe K."/>
            <person name="Clark M.D."/>
            <person name="Torroja C.F."/>
            <person name="Torrance J."/>
            <person name="Berthelot C."/>
            <person name="Muffato M."/>
            <person name="Collins J.E."/>
            <person name="Humphray S."/>
            <person name="McLaren K."/>
            <person name="Matthews L."/>
            <person name="McLaren S."/>
            <person name="Sealy I."/>
            <person name="Caccamo M."/>
            <person name="Churcher C."/>
            <person name="Scott C."/>
            <person name="Barrett J.C."/>
            <person name="Koch R."/>
            <person name="Rauch G.J."/>
            <person name="White S."/>
            <person name="Chow W."/>
            <person name="Kilian B."/>
            <person name="Quintais L.T."/>
            <person name="Guerra-Assuncao J.A."/>
            <person name="Zhou Y."/>
            <person name="Gu Y."/>
            <person name="Yen J."/>
            <person name="Vogel J.H."/>
            <person name="Eyre T."/>
            <person name="Redmond S."/>
            <person name="Banerjee R."/>
            <person name="Chi J."/>
            <person name="Fu B."/>
            <person name="Langley E."/>
            <person name="Maguire S.F."/>
            <person name="Laird G.K."/>
            <person name="Lloyd D."/>
            <person name="Kenyon E."/>
            <person name="Donaldson S."/>
            <person name="Sehra H."/>
            <person name="Almeida-King J."/>
            <person name="Loveland J."/>
            <person name="Trevanion S."/>
            <person name="Jones M."/>
            <person name="Quail M."/>
            <person name="Willey D."/>
            <person name="Hunt A."/>
            <person name="Burton J."/>
            <person name="Sims S."/>
            <person name="McLay K."/>
            <person name="Plumb B."/>
            <person name="Davis J."/>
            <person name="Clee C."/>
            <person name="Oliver K."/>
            <person name="Clark R."/>
            <person name="Riddle C."/>
            <person name="Elliot D."/>
            <person name="Threadgold G."/>
            <person name="Harden G."/>
            <person name="Ware D."/>
            <person name="Begum S."/>
            <person name="Mortimore B."/>
            <person name="Kerry G."/>
            <person name="Heath P."/>
            <person name="Phillimore B."/>
            <person name="Tracey A."/>
            <person name="Corby N."/>
            <person name="Dunn M."/>
            <person name="Johnson C."/>
            <person name="Wood J."/>
            <person name="Clark S."/>
            <person name="Pelan S."/>
            <person name="Griffiths G."/>
            <person name="Smith M."/>
            <person name="Glithero R."/>
            <person name="Howden P."/>
            <person name="Barker N."/>
            <person name="Lloyd C."/>
            <person name="Stevens C."/>
            <person name="Harley J."/>
            <person name="Holt K."/>
            <person name="Panagiotidis G."/>
            <person name="Lovell J."/>
            <person name="Beasley H."/>
            <person name="Henderson C."/>
            <person name="Gordon D."/>
            <person name="Auger K."/>
            <person name="Wright D."/>
            <person name="Collins J."/>
            <person name="Raisen C."/>
            <person name="Dyer L."/>
            <person name="Leung K."/>
            <person name="Robertson L."/>
            <person name="Ambridge K."/>
            <person name="Leongamornlert D."/>
            <person name="McGuire S."/>
            <person name="Gilderthorp R."/>
            <person name="Griffiths C."/>
            <person name="Manthravadi D."/>
            <person name="Nichol S."/>
            <person name="Barker G."/>
            <person name="Whitehead S."/>
            <person name="Kay M."/>
            <person name="Brown J."/>
            <person name="Murnane C."/>
            <person name="Gray E."/>
            <person name="Humphries M."/>
            <person name="Sycamore N."/>
            <person name="Barker D."/>
            <person name="Saunders D."/>
            <person name="Wallis J."/>
            <person name="Babbage A."/>
            <person name="Hammond S."/>
            <person name="Mashreghi-Mohammadi M."/>
            <person name="Barr L."/>
            <person name="Martin S."/>
            <person name="Wray P."/>
            <person name="Ellington A."/>
            <person name="Matthews N."/>
            <person name="Ellwood M."/>
            <person name="Woodmansey R."/>
            <person name="Clark G."/>
            <person name="Cooper J."/>
            <person name="Tromans A."/>
            <person name="Grafham D."/>
            <person name="Skuce C."/>
            <person name="Pandian R."/>
            <person name="Andrews R."/>
            <person name="Harrison E."/>
            <person name="Kimberley A."/>
            <person name="Garnett J."/>
            <person name="Fosker N."/>
            <person name="Hall R."/>
            <person name="Garner P."/>
            <person name="Kelly D."/>
            <person name="Bird C."/>
            <person name="Palmer S."/>
            <person name="Gehring I."/>
            <person name="Berger A."/>
            <person name="Dooley C.M."/>
            <person name="Ersan-Urun Z."/>
            <person name="Eser C."/>
            <person name="Geiger H."/>
            <person name="Geisler M."/>
            <person name="Karotki L."/>
            <person name="Kirn A."/>
            <person name="Konantz J."/>
            <person name="Konantz M."/>
            <person name="Oberlander M."/>
            <person name="Rudolph-Geiger S."/>
            <person name="Teucke M."/>
            <person name="Lanz C."/>
            <person name="Raddatz G."/>
            <person name="Osoegawa K."/>
            <person name="Zhu B."/>
            <person name="Rapp A."/>
            <person name="Widaa S."/>
            <person name="Langford C."/>
            <person name="Yang F."/>
            <person name="Schuster S.C."/>
            <person name="Carter N.P."/>
            <person name="Harrow J."/>
            <person name="Ning Z."/>
            <person name="Herrero J."/>
            <person name="Searle S.M."/>
            <person name="Enright A."/>
            <person name="Geisler R."/>
            <person name="Plasterk R.H."/>
            <person name="Lee C."/>
            <person name="Westerfield M."/>
            <person name="de Jong P.J."/>
            <person name="Zon L.I."/>
            <person name="Postlethwait J.H."/>
            <person name="Nusslein-Volhard C."/>
            <person name="Hubbard T.J."/>
            <person name="Roest Crollius H."/>
            <person name="Rogers J."/>
            <person name="Stemple D.L."/>
        </authorList>
    </citation>
    <scope>NUCLEOTIDE SEQUENCE [LARGE SCALE GENOMIC DNA]</scope>
    <source>
        <strain>Tuebingen</strain>
    </source>
</reference>
<reference key="2">
    <citation type="submission" date="2003-05" db="EMBL/GenBank/DDBJ databases">
        <authorList>
            <consortium name="NIH - Zebrafish Gene Collection (ZGC) project"/>
        </authorList>
    </citation>
    <scope>NUCLEOTIDE SEQUENCE [LARGE SCALE MRNA]</scope>
</reference>
<reference key="3">
    <citation type="journal article" date="2018" name="Ann. Neurol.">
        <title>Homozygous splicing mutation in NUP133 causes Galloway-Mowat syndrome.</title>
        <authorList>
            <person name="Fujita A."/>
            <person name="Tsukaguchi H."/>
            <person name="Koshimizu E."/>
            <person name="Nakazato H."/>
            <person name="Itoh K."/>
            <person name="Kuraoka S."/>
            <person name="Komohara Y."/>
            <person name="Shiina M."/>
            <person name="Nakamura S."/>
            <person name="Kitajima M."/>
            <person name="Tsurusaki Y."/>
            <person name="Miyatake S."/>
            <person name="Ogata K."/>
            <person name="Iijima K."/>
            <person name="Matsumoto N."/>
            <person name="Miyake N."/>
        </authorList>
    </citation>
    <scope>FUNCTION</scope>
    <scope>TISSUE SPECIFICITY</scope>
    <scope>DISRUPTION PHENOTYPE</scope>
</reference>
<reference key="4">
    <citation type="journal article" date="2019" name="Ann. Neurol.">
        <authorList>
            <person name="Fujita A."/>
            <person name="Tsukaguchi H."/>
            <person name="Koshimizu E."/>
            <person name="Nakazato H."/>
            <person name="Itoh K."/>
            <person name="Kuraoka S."/>
            <person name="Komohara Y."/>
            <person name="Shiina M."/>
            <person name="Nakamura S."/>
            <person name="Kitajima M."/>
            <person name="Tsurusaki Y."/>
            <person name="Miyatake S."/>
            <person name="Ogata K."/>
            <person name="Iijima K."/>
            <person name="Matsumoto N."/>
            <person name="Miyake N."/>
        </authorList>
    </citation>
    <scope>ERRATUM OF PUBMED:30427554</scope>
</reference>
<feature type="chain" id="PRO_0000447883" description="Nuclear pore complex protein Nup133">
    <location>
        <begin position="1"/>
        <end position="1136"/>
    </location>
</feature>
<feature type="region of interest" description="Disordered" evidence="2">
    <location>
        <begin position="1"/>
        <end position="26"/>
    </location>
</feature>
<feature type="sequence conflict" description="In Ref. 2; AAH52764." evidence="4" ref="2">
    <original>D</original>
    <variation>N</variation>
    <location>
        <position position="61"/>
    </location>
</feature>
<feature type="sequence conflict" description="In Ref. 2; AAH52764." evidence="4" ref="2">
    <original>Y</original>
    <variation>F</variation>
    <location>
        <position position="132"/>
    </location>
</feature>
<feature type="sequence conflict" description="In Ref. 2; AAH52764." evidence="4" ref="2">
    <original>L</original>
    <variation>V</variation>
    <location>
        <position position="211"/>
    </location>
</feature>
<feature type="sequence conflict" description="In Ref. 2; AAH52764." evidence="4" ref="2">
    <original>A</original>
    <variation>S</variation>
    <location>
        <position position="329"/>
    </location>
</feature>
<proteinExistence type="evidence at transcript level"/>
<gene>
    <name evidence="5" type="primary">nup133</name>
    <name evidence="5" type="ORF">zgc:55311</name>
</gene>
<comment type="function">
    <text evidence="1 3">Involved in poly(A)+ RNA transport (By similarity). Involved in nephrogenesis (PubMed:30427554).</text>
</comment>
<comment type="subunit">
    <text evidence="1">Forms part of the Nup160 subcomplex in the nuclear pore which is composed of NUP160, NUP133, NUP107 and Nup96. This complex plays a role in RNA export and in tethering Nup98 and NUP153 to the nucleus.</text>
</comment>
<comment type="subcellular location">
    <subcellularLocation>
        <location evidence="1">Nucleus</location>
        <location evidence="1">Nuclear pore complex</location>
    </subcellularLocation>
    <subcellularLocation>
        <location evidence="1">Chromosome</location>
        <location evidence="1">Centromere</location>
        <location evidence="1">Kinetochore</location>
    </subcellularLocation>
    <text evidence="1">Located on both the cytoplasmic and nuclear sides of the nuclear pore. During mitosis, localizes to the kinetochores.</text>
</comment>
<comment type="tissue specificity">
    <text evidence="3">Widely expressed in the embryo and in adult tissues. Higher expression is observed in the brain, testes, ovary, skin, and kidney.</text>
</comment>
<comment type="disruption phenotype">
    <text evidence="3">Morpholino knockdown of the protein results in anomalies of the head, brain and kidney. Morphant embryos show decreased head sizes, reduced axonal numbers in the forebrain and midbrain, and disorganization in the hindbrain. As for the renal tissues, morphants show underdeveloped glomeruli with hypoplastic capillary vessels, and abnormal podocytes.</text>
</comment>
<comment type="similarity">
    <text evidence="4">Belongs to the nucleoporin Nup133 family.</text>
</comment>
<sequence>MFSPRGTPGSGRRQAPRTGGRRSVSAVQPGLLFSPRRSAVTARSTPTRVQSHAVVESYNFDVQTFGSSLPVKVMEALTMADVDDQISVKVEASGWAWMVCGERLIVWKVSQTSVAKLSVCKDLQLPSSEFAYSADLVSISSSGPLDLAPIQSISVLAVSPDGLVRFWPSLAHEGSYTEISLDLSGHLSNYVAAVKGGSFIVSSYRGHLLRLSADSSGKLHHRPVQQGQGMLSGIGRRVSSLFGIRGQPADLSVFSVLWVKASSCLYSLSSCGLSKWEVDENSETQVLSWSTNQIITDSITDAIWDSESNYSEIKKGVNVLYLDMQPSNAGLVVLAAAWYPGDTPCVAYFCLVTLAESIVPSPDLLTVEVTKYNPPFQSEEELLKTRLVLPDPSSPAAYLYNEELVFACSTGAGRGGLAEEKILFSSPGDRVRGGGVCADLPVFFSQNSGLVAVLARETASLLPETMEDSLCTSVAGPGPEGTPLETPPKIDMVAQEDKTKLLKQAFLQFCRHDLVGAQSMVDELFPSDGEGSADLDTVVTQIDLDLVDDYPACDPRWAESVPDEGAGFTLTSLILLHQLEDKMKAHRCLMDFLLQTGLLDRLTSTKVRSCPMATRLLLCEHAEKLSAAIVLKNHHAKHPELVNTAIQTALKKNSTDTPTNLTPADVFFREVSQISSIFECLLDEEEKALKEHPDAARWGEVVLSVNDIIKDMLQAAAQYRETKASLYRAPENCSPEPEYIPWTASGGVGGVRSVISRQHELILRAAYPHADAELRSVLCEQLVALLDSLLSGYVAQLTSLRRGGQQERYDTLENEYTQKRSELLKPLLELGQHQWVAALAEKYCDFDILVQLCERTDNQSRLQQYMVKFADQNFADFLFRWYMEKGKRGKLLSQPMATHQQLASFLQAHDHLSWLHDIHVQDYQRAHRTLYNQANMETRYFSKKKTLLALSKLTALASDMPEPVHRRQLNDIVEQERFLLHQETLPKQLLEEKQLNPDSMPLLSPQNLISLYICDENRGANEYDFKKALDLLEYFEEENGIDVDALKREIFSKALKKDWKESWSSSDDNDDPLEAARDSTFVKILQKLIQERVSLQTYLPDIKDLLQEDELESLKSKPYFEFLLRANYEHYLKVQI</sequence>
<organism>
    <name type="scientific">Danio rerio</name>
    <name type="common">Zebrafish</name>
    <name type="synonym">Brachydanio rerio</name>
    <dbReference type="NCBI Taxonomy" id="7955"/>
    <lineage>
        <taxon>Eukaryota</taxon>
        <taxon>Metazoa</taxon>
        <taxon>Chordata</taxon>
        <taxon>Craniata</taxon>
        <taxon>Vertebrata</taxon>
        <taxon>Euteleostomi</taxon>
        <taxon>Actinopterygii</taxon>
        <taxon>Neopterygii</taxon>
        <taxon>Teleostei</taxon>
        <taxon>Ostariophysi</taxon>
        <taxon>Cypriniformes</taxon>
        <taxon>Danionidae</taxon>
        <taxon>Danioninae</taxon>
        <taxon>Danio</taxon>
    </lineage>
</organism>
<accession>F1QNV4</accession>
<accession>Q7SZE9</accession>
<evidence type="ECO:0000250" key="1">
    <source>
        <dbReference type="UniProtKB" id="Q8WUM0"/>
    </source>
</evidence>
<evidence type="ECO:0000256" key="2">
    <source>
        <dbReference type="SAM" id="MobiDB-lite"/>
    </source>
</evidence>
<evidence type="ECO:0000269" key="3">
    <source>
    </source>
</evidence>
<evidence type="ECO:0000305" key="4"/>
<evidence type="ECO:0000312" key="5">
    <source>
        <dbReference type="ZFIN" id="ZDB-GENE-040426-2941"/>
    </source>
</evidence>
<name>NU133_DANRE</name>